<evidence type="ECO:0000250" key="1"/>
<evidence type="ECO:0000255" key="2">
    <source>
        <dbReference type="HAMAP-Rule" id="MF_01158"/>
    </source>
</evidence>
<evidence type="ECO:0000305" key="3"/>
<reference key="1">
    <citation type="submission" date="2008-05" db="EMBL/GenBank/DDBJ databases">
        <title>Complete sequence of Shigella boydii serotype 18 strain BS512.</title>
        <authorList>
            <person name="Rasko D.A."/>
            <person name="Rosovitz M."/>
            <person name="Maurelli A.T."/>
            <person name="Myers G."/>
            <person name="Seshadri R."/>
            <person name="Cer R."/>
            <person name="Jiang L."/>
            <person name="Ravel J."/>
            <person name="Sebastian Y."/>
        </authorList>
    </citation>
    <scope>NUCLEOTIDE SEQUENCE [LARGE SCALE GENOMIC DNA]</scope>
    <source>
        <strain>CDC 3083-94 / BS512</strain>
    </source>
</reference>
<gene>
    <name evidence="2" type="primary">hda</name>
    <name type="ordered locus">SbBS512_E2870</name>
</gene>
<name>HDA_SHIB3</name>
<feature type="chain" id="PRO_1000137824" description="DnaA regulatory inactivator Hda">
    <location>
        <begin position="1"/>
        <end position="233"/>
    </location>
</feature>
<dbReference type="EMBL" id="CP001063">
    <property type="protein sequence ID" value="ACD09989.1"/>
    <property type="status" value="ALT_INIT"/>
    <property type="molecule type" value="Genomic_DNA"/>
</dbReference>
<dbReference type="RefSeq" id="WP_001307333.1">
    <property type="nucleotide sequence ID" value="NC_010658.1"/>
</dbReference>
<dbReference type="SMR" id="B2TXS1"/>
<dbReference type="STRING" id="344609.SbBS512_E2870"/>
<dbReference type="KEGG" id="sbc:SbBS512_E2870"/>
<dbReference type="HOGENOM" id="CLU_072265_1_1_6"/>
<dbReference type="Proteomes" id="UP000001030">
    <property type="component" value="Chromosome"/>
</dbReference>
<dbReference type="GO" id="GO:0006270">
    <property type="term" value="P:DNA replication initiation"/>
    <property type="evidence" value="ECO:0007669"/>
    <property type="project" value="TreeGrafter"/>
</dbReference>
<dbReference type="GO" id="GO:0032297">
    <property type="term" value="P:negative regulation of DNA-templated DNA replication initiation"/>
    <property type="evidence" value="ECO:0007669"/>
    <property type="project" value="InterPro"/>
</dbReference>
<dbReference type="FunFam" id="1.10.8.60:FF:000024">
    <property type="entry name" value="DnaA regulatory inactivator Hda"/>
    <property type="match status" value="1"/>
</dbReference>
<dbReference type="FunFam" id="3.40.50.300:FF:000452">
    <property type="entry name" value="DnaA regulatory inactivator Hda"/>
    <property type="match status" value="1"/>
</dbReference>
<dbReference type="Gene3D" id="1.10.8.60">
    <property type="match status" value="1"/>
</dbReference>
<dbReference type="Gene3D" id="3.40.50.300">
    <property type="entry name" value="P-loop containing nucleotide triphosphate hydrolases"/>
    <property type="match status" value="1"/>
</dbReference>
<dbReference type="HAMAP" id="MF_01158">
    <property type="entry name" value="Hda"/>
    <property type="match status" value="1"/>
</dbReference>
<dbReference type="InterPro" id="IPR020591">
    <property type="entry name" value="Chromosome_initiator_DnaA-like"/>
</dbReference>
<dbReference type="InterPro" id="IPR013317">
    <property type="entry name" value="DnaA_dom"/>
</dbReference>
<dbReference type="InterPro" id="IPR017788">
    <property type="entry name" value="Hda"/>
</dbReference>
<dbReference type="InterPro" id="IPR022864">
    <property type="entry name" value="Hda_Enterobact"/>
</dbReference>
<dbReference type="InterPro" id="IPR055199">
    <property type="entry name" value="Hda_lid"/>
</dbReference>
<dbReference type="InterPro" id="IPR027417">
    <property type="entry name" value="P-loop_NTPase"/>
</dbReference>
<dbReference type="NCBIfam" id="TIGR03420">
    <property type="entry name" value="DnaA_homol_Hda"/>
    <property type="match status" value="1"/>
</dbReference>
<dbReference type="NCBIfam" id="NF005982">
    <property type="entry name" value="PRK08084.1"/>
    <property type="match status" value="1"/>
</dbReference>
<dbReference type="PANTHER" id="PTHR30050">
    <property type="entry name" value="CHROMOSOMAL REPLICATION INITIATOR PROTEIN DNAA"/>
    <property type="match status" value="1"/>
</dbReference>
<dbReference type="PANTHER" id="PTHR30050:SF5">
    <property type="entry name" value="DNAA REGULATORY INACTIVATOR HDA"/>
    <property type="match status" value="1"/>
</dbReference>
<dbReference type="Pfam" id="PF00308">
    <property type="entry name" value="Bac_DnaA"/>
    <property type="match status" value="1"/>
</dbReference>
<dbReference type="Pfam" id="PF22688">
    <property type="entry name" value="Hda_lid"/>
    <property type="match status" value="1"/>
</dbReference>
<dbReference type="PRINTS" id="PR00051">
    <property type="entry name" value="DNAA"/>
</dbReference>
<dbReference type="SUPFAM" id="SSF52540">
    <property type="entry name" value="P-loop containing nucleoside triphosphate hydrolases"/>
    <property type="match status" value="1"/>
</dbReference>
<protein>
    <recommendedName>
        <fullName evidence="2">DnaA regulatory inactivator Hda</fullName>
    </recommendedName>
</protein>
<sequence>MNTPAQLSLPLYLPDDETFASFWPGDNSSLLAALQNVLRQEHSGYIYLWAREGAGRSHLLHAACAELSQRGDAVGYVPLDKRTWFVPEVLDGMEHLSLVCIDNIECIAGDELWEMAIFDLYNRILESGKTRLLITGDRPPRQLNLGLPDLASRLDWGQIYKLQPLSDEDKLQALQLRARLRGFELPEDVGRFLLKRLDREMRTLFMTLDQLDRASITAQRKLTIPFVKEILKL</sequence>
<accession>B2TXS1</accession>
<keyword id="KW-0235">DNA replication</keyword>
<keyword id="KW-0236">DNA replication inhibitor</keyword>
<keyword id="KW-1185">Reference proteome</keyword>
<proteinExistence type="inferred from homology"/>
<comment type="function">
    <text evidence="1">Mediates the interaction of DNA replication initiator protein DnaA with DNA polymerase subunit beta sliding clamp (dnaN). Stimulates hydrolysis of ATP-DnaA to ADP-DnaA, rendering DnaA inactive for reinitiation, a process called regulatory inhibition of DnaA or RIDA (By similarity).</text>
</comment>
<comment type="subunit">
    <text evidence="2">The active form seems to be an ADP-bound monomer. Forms the RIDA complex (regulatory inactivation of DnaA) of ATP-DnaA, ADP-Hda and the DNA-loaded beta sliding clamp (dnaN).</text>
</comment>
<comment type="similarity">
    <text evidence="2">Belongs to the DnaA family. HdA subfamily.</text>
</comment>
<comment type="sequence caution" evidence="3">
    <conflict type="erroneous initiation">
        <sequence resource="EMBL-CDS" id="ACD09989"/>
    </conflict>
</comment>
<organism>
    <name type="scientific">Shigella boydii serotype 18 (strain CDC 3083-94 / BS512)</name>
    <dbReference type="NCBI Taxonomy" id="344609"/>
    <lineage>
        <taxon>Bacteria</taxon>
        <taxon>Pseudomonadati</taxon>
        <taxon>Pseudomonadota</taxon>
        <taxon>Gammaproteobacteria</taxon>
        <taxon>Enterobacterales</taxon>
        <taxon>Enterobacteriaceae</taxon>
        <taxon>Shigella</taxon>
    </lineage>
</organism>